<organism>
    <name type="scientific">Macaca fascicularis</name>
    <name type="common">Crab-eating macaque</name>
    <name type="synonym">Cynomolgus monkey</name>
    <dbReference type="NCBI Taxonomy" id="9541"/>
    <lineage>
        <taxon>Eukaryota</taxon>
        <taxon>Metazoa</taxon>
        <taxon>Chordata</taxon>
        <taxon>Craniata</taxon>
        <taxon>Vertebrata</taxon>
        <taxon>Euteleostomi</taxon>
        <taxon>Mammalia</taxon>
        <taxon>Eutheria</taxon>
        <taxon>Euarchontoglires</taxon>
        <taxon>Primates</taxon>
        <taxon>Haplorrhini</taxon>
        <taxon>Catarrhini</taxon>
        <taxon>Cercopithecidae</taxon>
        <taxon>Cercopithecinae</taxon>
        <taxon>Macaca</taxon>
    </lineage>
</organism>
<proteinExistence type="evidence at transcript level"/>
<accession>Q4R6C5</accession>
<accession>Q9BE25</accession>
<keyword id="KW-0025">Alternative splicing</keyword>
<keyword id="KW-0966">Cell projection</keyword>
<keyword id="KW-0969">Cilium</keyword>
<keyword id="KW-0282">Flagellum</keyword>
<keyword id="KW-0597">Phosphoprotein</keyword>
<keyword id="KW-1185">Reference proteome</keyword>
<keyword id="KW-0832">Ubl conjugation</keyword>
<comment type="function">
    <text evidence="5">Important for male fertility. With ROPN1L, involved in fibrous sheath integrity and sperm motility, plays a role in PKA-dependent signaling processes required for spermatozoa capacitation.</text>
</comment>
<comment type="subunit">
    <text evidence="3 4 5">Homodimer. Interacts with AKAP3 (By similarity). May interact with SPA17 (By similarity). Interacts with RHPN1 (By similarity). Interacts with FSCB; the interaction increases upon spermatozoa capacitation conditions (By similarity). Interacts with CFAP61 (By similarity).</text>
</comment>
<comment type="subcellular location">
    <subcellularLocation>
        <location evidence="5">Cell projection</location>
        <location evidence="5">Cilium</location>
        <location evidence="5">Flagellum</location>
    </subcellularLocation>
    <text evidence="5">In the sperm tail, found in the principal piece and in the cytoplasmic droplet located at the distal end of the midpiece. Inner surface of the fibrous sheath.</text>
</comment>
<comment type="alternative products">
    <event type="alternative splicing"/>
    <isoform>
        <id>Q4R6C5-1</id>
        <name>1</name>
        <sequence type="displayed"/>
    </isoform>
    <isoform>
        <id>Q4R6C5-2</id>
        <name>2</name>
        <sequence type="described" ref="VSP_028746"/>
    </isoform>
</comment>
<comment type="domain">
    <text evidence="1">The RIIa domain mediates interaction with AKAP3.</text>
</comment>
<comment type="PTM">
    <text evidence="5">Sumoylated, sumoylation decreases upon spermatozoa capacitation conditions.</text>
</comment>
<comment type="miscellaneous">
    <text>'Ropporin' comes from the Japanese word 'oppo' which means 'tail'.</text>
</comment>
<comment type="similarity">
    <text evidence="7">Belongs to the ropporin family.</text>
</comment>
<protein>
    <recommendedName>
        <fullName>Ropporin-1</fullName>
    </recommendedName>
    <alternativeName>
        <fullName>Rhophilin-associated protein 1</fullName>
    </alternativeName>
</protein>
<gene>
    <name type="primary">ROPN1</name>
    <name type="ORF">QflA-14788</name>
    <name type="ORF">QtsA-18306</name>
</gene>
<name>ROP1_MACFA</name>
<feature type="chain" id="PRO_0000307394" description="Ropporin-1">
    <location>
        <begin position="1"/>
        <end position="212"/>
    </location>
</feature>
<feature type="domain" description="RIIa">
    <location>
        <begin position="12"/>
        <end position="49"/>
    </location>
</feature>
<feature type="region of interest" description="Interaction with RHPN1" evidence="1">
    <location>
        <begin position="209"/>
        <end position="212"/>
    </location>
</feature>
<feature type="modified residue" description="Phosphoserine" evidence="2">
    <location>
        <position position="56"/>
    </location>
</feature>
<feature type="splice variant" id="VSP_028746" description="In isoform 2." evidence="6">
    <location>
        <begin position="1"/>
        <end position="92"/>
    </location>
</feature>
<sequence>MAQTDKPTCIPPELPKMLKEFAKAAIRAQPQDLIQWGADYFEALSRGETPPVREQSERVALCNWAELTPEVLKILHSQVAGRLIVHAEELAQMWKVVNLPADLFNSVMNVGRFTEEIEWLKFLALACSALGVTITKTLKIVCEVLSCDHNGGLPRIPFSTFQFLYTYIAEVDGEISASHVSRMLNYIEQEVIGPDGLITVNDFTQNPRVWLE</sequence>
<dbReference type="EMBL" id="AB060221">
    <property type="protein sequence ID" value="BAB41155.1"/>
    <property type="molecule type" value="mRNA"/>
</dbReference>
<dbReference type="EMBL" id="AB169260">
    <property type="protein sequence ID" value="BAE01350.1"/>
    <property type="molecule type" value="mRNA"/>
</dbReference>
<dbReference type="RefSeq" id="NP_001270153.1">
    <property type="nucleotide sequence ID" value="NM_001283224.1"/>
</dbReference>
<dbReference type="SMR" id="Q4R6C5"/>
<dbReference type="STRING" id="9541.ENSMFAP00000040945"/>
<dbReference type="Ensembl" id="ENSMFAT00000029276.2">
    <molecule id="Q4R6C5-1"/>
    <property type="protein sequence ID" value="ENSMFAP00000001101.2"/>
    <property type="gene ID" value="ENSMFAG00000040261.2"/>
</dbReference>
<dbReference type="eggNOG" id="ENOG502R2JI">
    <property type="taxonomic scope" value="Eukaryota"/>
</dbReference>
<dbReference type="GeneTree" id="ENSGT00390000012731"/>
<dbReference type="Proteomes" id="UP000233100">
    <property type="component" value="Chromosome 2"/>
</dbReference>
<dbReference type="Bgee" id="ENSMFAG00000040261">
    <property type="expression patterns" value="Expressed in skeletal muscle tissue"/>
</dbReference>
<dbReference type="GO" id="GO:0005737">
    <property type="term" value="C:cytoplasm"/>
    <property type="evidence" value="ECO:0007669"/>
    <property type="project" value="Ensembl"/>
</dbReference>
<dbReference type="GO" id="GO:0031514">
    <property type="term" value="C:motile cilium"/>
    <property type="evidence" value="ECO:0007669"/>
    <property type="project" value="UniProtKB-SubCell"/>
</dbReference>
<dbReference type="GO" id="GO:0046982">
    <property type="term" value="F:protein heterodimerization activity"/>
    <property type="evidence" value="ECO:0007669"/>
    <property type="project" value="Ensembl"/>
</dbReference>
<dbReference type="GO" id="GO:0044782">
    <property type="term" value="P:cilium organization"/>
    <property type="evidence" value="ECO:0000250"/>
    <property type="project" value="UniProtKB"/>
</dbReference>
<dbReference type="GO" id="GO:0030317">
    <property type="term" value="P:flagellated sperm motility"/>
    <property type="evidence" value="ECO:0000250"/>
    <property type="project" value="UniProtKB"/>
</dbReference>
<dbReference type="GO" id="GO:0061512">
    <property type="term" value="P:protein localization to cilium"/>
    <property type="evidence" value="ECO:0000250"/>
    <property type="project" value="UniProtKB"/>
</dbReference>
<dbReference type="GO" id="GO:0001932">
    <property type="term" value="P:regulation of protein phosphorylation"/>
    <property type="evidence" value="ECO:0000250"/>
    <property type="project" value="UniProtKB"/>
</dbReference>
<dbReference type="GO" id="GO:0048240">
    <property type="term" value="P:sperm capacitation"/>
    <property type="evidence" value="ECO:0000250"/>
    <property type="project" value="UniProtKB"/>
</dbReference>
<dbReference type="CDD" id="cd23019">
    <property type="entry name" value="DD_ROP"/>
    <property type="match status" value="1"/>
</dbReference>
<dbReference type="FunFam" id="1.20.890.10:FF:000004">
    <property type="entry name" value="ropporin-1-like protein isoform X2"/>
    <property type="match status" value="1"/>
</dbReference>
<dbReference type="Gene3D" id="1.20.890.10">
    <property type="entry name" value="cAMP-dependent protein kinase regulatory subunit, dimerization-anchoring domain"/>
    <property type="match status" value="1"/>
</dbReference>
<dbReference type="InterPro" id="IPR047844">
    <property type="entry name" value="ROP_DD"/>
</dbReference>
<dbReference type="PANTHER" id="PTHR14952">
    <property type="entry name" value="ROPPORIN-1-LIKE PROTEIN"/>
    <property type="match status" value="1"/>
</dbReference>
<dbReference type="PANTHER" id="PTHR14952:SF12">
    <property type="entry name" value="ROPPORIN-1B"/>
    <property type="match status" value="1"/>
</dbReference>
<dbReference type="SUPFAM" id="SSF47391">
    <property type="entry name" value="Dimerization-anchoring domain of cAMP-dependent PK regulatory subunit"/>
    <property type="match status" value="1"/>
</dbReference>
<evidence type="ECO:0000250" key="1"/>
<evidence type="ECO:0000250" key="2">
    <source>
        <dbReference type="UniProtKB" id="Q4KLL5"/>
    </source>
</evidence>
<evidence type="ECO:0000250" key="3">
    <source>
        <dbReference type="UniProtKB" id="Q96C74"/>
    </source>
</evidence>
<evidence type="ECO:0000250" key="4">
    <source>
        <dbReference type="UniProtKB" id="Q9BZX4"/>
    </source>
</evidence>
<evidence type="ECO:0000250" key="5">
    <source>
        <dbReference type="UniProtKB" id="Q9ESG2"/>
    </source>
</evidence>
<evidence type="ECO:0000303" key="6">
    <source ref="1"/>
</evidence>
<evidence type="ECO:0000305" key="7"/>
<reference key="1">
    <citation type="submission" date="2001-04" db="EMBL/GenBank/DDBJ databases">
        <title>Isolation of full-length cDNA clones from macaque brain cDNA libraries.</title>
        <authorList>
            <person name="Osada N."/>
            <person name="Hida M."/>
            <person name="Kusuda J."/>
            <person name="Tanuma R."/>
            <person name="Iseki K."/>
            <person name="Hirai M."/>
            <person name="Terao K."/>
            <person name="Suzuki Y."/>
            <person name="Sugano S."/>
            <person name="Hashimoto K."/>
        </authorList>
    </citation>
    <scope>NUCLEOTIDE SEQUENCE [LARGE SCALE MRNA] (ISOFORM 2)</scope>
    <source>
        <tissue>Frontal cortex</tissue>
    </source>
</reference>
<reference key="2">
    <citation type="submission" date="2005-06" db="EMBL/GenBank/DDBJ databases">
        <title>DNA sequences of macaque genes expressed in brain or testis and its evolutionary implications.</title>
        <authorList>
            <consortium name="International consortium for macaque cDNA sequencing and analysis"/>
        </authorList>
    </citation>
    <scope>NUCLEOTIDE SEQUENCE [LARGE SCALE MRNA] (ISOFORM 1)</scope>
    <source>
        <tissue>Testis</tissue>
    </source>
</reference>